<reference key="1">
    <citation type="journal article" date="2005" name="J. Bacteriol.">
        <title>Completion of the genome sequence of Brucella abortus and comparison to the highly similar genomes of Brucella melitensis and Brucella suis.</title>
        <authorList>
            <person name="Halling S.M."/>
            <person name="Peterson-Burch B.D."/>
            <person name="Bricker B.J."/>
            <person name="Zuerner R.L."/>
            <person name="Qing Z."/>
            <person name="Li L.-L."/>
            <person name="Kapur V."/>
            <person name="Alt D.P."/>
            <person name="Olsen S.C."/>
        </authorList>
    </citation>
    <scope>NUCLEOTIDE SEQUENCE [LARGE SCALE GENOMIC DNA]</scope>
    <source>
        <strain>9-941</strain>
    </source>
</reference>
<protein>
    <recommendedName>
        <fullName evidence="1">Malate synthase G</fullName>
        <ecNumber evidence="1">2.3.3.9</ecNumber>
    </recommendedName>
</protein>
<sequence length="728" mass="80044">MGSAEKRNYVEIEGLAVAPELVEFLAKEAAPGTGVEPEKFWKGFAAIIRDLTPKNRALLAKRDELQARIDAWYKENRDKGYSQADYQQFLKDIGYLLPEGGAFSVSTTNVDPEITHIAGPQLVVPVMNARYALNAANARWGSLYDALYGTDAISEADGAEKGKGYNPKRGEKVIAWAKNFLDESAPLSTGKWADVAGLAVNDGKLEIRLTDGSATTLKDESQFKGYNGDAASPTNVLLAKHNMHVDIVINADHPIGKTDPAHIADVVLESAISTIQDCEDSIAVVDAEDKVAVYRNWLGLMNGKLEDTFEKNGKQMTRRLNGDRTYTAPDGSTLTLKGRSLMLVRNVGHLMTNPAILDAEGNEVPEGIMDAAFTSLIALHDIGPNGRHMNSREGSVYIVKPKMHGPEEVAFANEIFTRTEEMLGMKPNTLKIGIMDEERRTTVNLKEAIRAAKDRVVFINTGFLDRTGDEIHTSMEAGPMIRKGDMKQAAWIGAYEQWNVDIGLECGLSGHAQIGKGMWAMPDMMAAMLEQKIAHPKAGANTAWVPSPTAATLHATHYHKIDVAAVQEKLKSRPRAKLDDILSVPVAVRPNWTPDDIQHEIDNNAQGILGYVVRWIDQGVGCSKVPDINNVGLMEDRATLRISAQHIANWLYHGVVSEAQVMETMKRMAAIVDKQNEGDPLYRPMAADFDKSIAFQAACDLVFKGREQPNGYTEPVLHRRRLELKQAS</sequence>
<accession>Q57BM8</accession>
<name>MASZ_BRUAB</name>
<feature type="chain" id="PRO_1000056898" description="Malate synthase G">
    <location>
        <begin position="1"/>
        <end position="728"/>
    </location>
</feature>
<feature type="active site" description="Proton acceptor" evidence="1">
    <location>
        <position position="345"/>
    </location>
</feature>
<feature type="active site" description="Proton donor" evidence="1">
    <location>
        <position position="636"/>
    </location>
</feature>
<feature type="binding site" evidence="1">
    <location>
        <position position="123"/>
    </location>
    <ligand>
        <name>acetyl-CoA</name>
        <dbReference type="ChEBI" id="CHEBI:57288"/>
    </ligand>
</feature>
<feature type="binding site" evidence="1">
    <location>
        <begin position="130"/>
        <end position="131"/>
    </location>
    <ligand>
        <name>acetyl-CoA</name>
        <dbReference type="ChEBI" id="CHEBI:57288"/>
    </ligand>
</feature>
<feature type="binding site" evidence="1">
    <location>
        <position position="281"/>
    </location>
    <ligand>
        <name>acetyl-CoA</name>
        <dbReference type="ChEBI" id="CHEBI:57288"/>
    </ligand>
</feature>
<feature type="binding site" evidence="1">
    <location>
        <position position="318"/>
    </location>
    <ligand>
        <name>acetyl-CoA</name>
        <dbReference type="ChEBI" id="CHEBI:57288"/>
    </ligand>
</feature>
<feature type="binding site" evidence="1">
    <location>
        <position position="345"/>
    </location>
    <ligand>
        <name>glyoxylate</name>
        <dbReference type="ChEBI" id="CHEBI:36655"/>
    </ligand>
</feature>
<feature type="binding site" evidence="1">
    <location>
        <position position="437"/>
    </location>
    <ligand>
        <name>glyoxylate</name>
        <dbReference type="ChEBI" id="CHEBI:36655"/>
    </ligand>
</feature>
<feature type="binding site" evidence="1">
    <location>
        <position position="437"/>
    </location>
    <ligand>
        <name>Mg(2+)</name>
        <dbReference type="ChEBI" id="CHEBI:18420"/>
    </ligand>
</feature>
<feature type="binding site" evidence="1">
    <location>
        <begin position="462"/>
        <end position="465"/>
    </location>
    <ligand>
        <name>glyoxylate</name>
        <dbReference type="ChEBI" id="CHEBI:36655"/>
    </ligand>
</feature>
<feature type="binding site" evidence="1">
    <location>
        <position position="465"/>
    </location>
    <ligand>
        <name>Mg(2+)</name>
        <dbReference type="ChEBI" id="CHEBI:18420"/>
    </ligand>
</feature>
<feature type="binding site" evidence="1">
    <location>
        <position position="546"/>
    </location>
    <ligand>
        <name>acetyl-CoA</name>
        <dbReference type="ChEBI" id="CHEBI:57288"/>
    </ligand>
</feature>
<feature type="modified residue" description="Cysteine sulfenic acid (-SOH)" evidence="1">
    <location>
        <position position="622"/>
    </location>
</feature>
<comment type="function">
    <text evidence="1">Involved in the glycolate utilization. Catalyzes the condensation and subsequent hydrolysis of acetyl-coenzyme A (acetyl-CoA) and glyoxylate to form malate and CoA.</text>
</comment>
<comment type="catalytic activity">
    <reaction evidence="1">
        <text>glyoxylate + acetyl-CoA + H2O = (S)-malate + CoA + H(+)</text>
        <dbReference type="Rhea" id="RHEA:18181"/>
        <dbReference type="ChEBI" id="CHEBI:15377"/>
        <dbReference type="ChEBI" id="CHEBI:15378"/>
        <dbReference type="ChEBI" id="CHEBI:15589"/>
        <dbReference type="ChEBI" id="CHEBI:36655"/>
        <dbReference type="ChEBI" id="CHEBI:57287"/>
        <dbReference type="ChEBI" id="CHEBI:57288"/>
        <dbReference type="EC" id="2.3.3.9"/>
    </reaction>
</comment>
<comment type="cofactor">
    <cofactor evidence="1">
        <name>Mg(2+)</name>
        <dbReference type="ChEBI" id="CHEBI:18420"/>
    </cofactor>
</comment>
<comment type="pathway">
    <text evidence="1">Carbohydrate metabolism; glyoxylate cycle; (S)-malate from isocitrate: step 2/2.</text>
</comment>
<comment type="subunit">
    <text evidence="1">Monomer.</text>
</comment>
<comment type="subcellular location">
    <subcellularLocation>
        <location evidence="1">Cytoplasm</location>
    </subcellularLocation>
</comment>
<comment type="similarity">
    <text evidence="1">Belongs to the malate synthase family. GlcB subfamily.</text>
</comment>
<proteinExistence type="inferred from homology"/>
<dbReference type="EC" id="2.3.3.9" evidence="1"/>
<dbReference type="EMBL" id="AE017223">
    <property type="protein sequence ID" value="AAX74956.1"/>
    <property type="molecule type" value="Genomic_DNA"/>
</dbReference>
<dbReference type="RefSeq" id="WP_002966937.1">
    <property type="nucleotide sequence ID" value="NC_006932.1"/>
</dbReference>
<dbReference type="SMR" id="Q57BM8"/>
<dbReference type="EnsemblBacteria" id="AAX74956">
    <property type="protein sequence ID" value="AAX74956"/>
    <property type="gene ID" value="BruAb1_1636"/>
</dbReference>
<dbReference type="KEGG" id="bmb:BruAb1_1636"/>
<dbReference type="HOGENOM" id="CLU_028446_1_0_5"/>
<dbReference type="UniPathway" id="UPA00703">
    <property type="reaction ID" value="UER00720"/>
</dbReference>
<dbReference type="Proteomes" id="UP000000540">
    <property type="component" value="Chromosome I"/>
</dbReference>
<dbReference type="GO" id="GO:0005829">
    <property type="term" value="C:cytosol"/>
    <property type="evidence" value="ECO:0007669"/>
    <property type="project" value="TreeGrafter"/>
</dbReference>
<dbReference type="GO" id="GO:0000287">
    <property type="term" value="F:magnesium ion binding"/>
    <property type="evidence" value="ECO:0007669"/>
    <property type="project" value="TreeGrafter"/>
</dbReference>
<dbReference type="GO" id="GO:0004474">
    <property type="term" value="F:malate synthase activity"/>
    <property type="evidence" value="ECO:0007669"/>
    <property type="project" value="UniProtKB-UniRule"/>
</dbReference>
<dbReference type="GO" id="GO:0009436">
    <property type="term" value="P:glyoxylate catabolic process"/>
    <property type="evidence" value="ECO:0007669"/>
    <property type="project" value="TreeGrafter"/>
</dbReference>
<dbReference type="GO" id="GO:0006097">
    <property type="term" value="P:glyoxylate cycle"/>
    <property type="evidence" value="ECO:0007669"/>
    <property type="project" value="UniProtKB-UniRule"/>
</dbReference>
<dbReference type="GO" id="GO:0006099">
    <property type="term" value="P:tricarboxylic acid cycle"/>
    <property type="evidence" value="ECO:0007669"/>
    <property type="project" value="UniProtKB-KW"/>
</dbReference>
<dbReference type="CDD" id="cd00728">
    <property type="entry name" value="malate_synt_G"/>
    <property type="match status" value="1"/>
</dbReference>
<dbReference type="FunFam" id="3.20.20.360:FF:000002">
    <property type="entry name" value="Malate synthase G"/>
    <property type="match status" value="1"/>
</dbReference>
<dbReference type="Gene3D" id="3.20.20.360">
    <property type="entry name" value="Malate synthase, domain 3"/>
    <property type="match status" value="2"/>
</dbReference>
<dbReference type="Gene3D" id="1.20.1220.12">
    <property type="entry name" value="Malate synthase, domain III"/>
    <property type="match status" value="1"/>
</dbReference>
<dbReference type="HAMAP" id="MF_00641">
    <property type="entry name" value="Malate_synth_G"/>
    <property type="match status" value="1"/>
</dbReference>
<dbReference type="InterPro" id="IPR044856">
    <property type="entry name" value="Malate_synth_C_sf"/>
</dbReference>
<dbReference type="InterPro" id="IPR011076">
    <property type="entry name" value="Malate_synth_sf"/>
</dbReference>
<dbReference type="InterPro" id="IPR001465">
    <property type="entry name" value="Malate_synthase_TIM"/>
</dbReference>
<dbReference type="InterPro" id="IPR006253">
    <property type="entry name" value="Malate_synthG"/>
</dbReference>
<dbReference type="InterPro" id="IPR048355">
    <property type="entry name" value="MS_C"/>
</dbReference>
<dbReference type="InterPro" id="IPR048356">
    <property type="entry name" value="MS_N"/>
</dbReference>
<dbReference type="InterPro" id="IPR046363">
    <property type="entry name" value="MS_N_TIM-barrel_dom"/>
</dbReference>
<dbReference type="InterPro" id="IPR048357">
    <property type="entry name" value="MSG_insertion"/>
</dbReference>
<dbReference type="NCBIfam" id="TIGR01345">
    <property type="entry name" value="malate_syn_G"/>
    <property type="match status" value="1"/>
</dbReference>
<dbReference type="NCBIfam" id="NF002825">
    <property type="entry name" value="PRK02999.1"/>
    <property type="match status" value="1"/>
</dbReference>
<dbReference type="PANTHER" id="PTHR42739">
    <property type="entry name" value="MALATE SYNTHASE G"/>
    <property type="match status" value="1"/>
</dbReference>
<dbReference type="PANTHER" id="PTHR42739:SF1">
    <property type="entry name" value="MALATE SYNTHASE G"/>
    <property type="match status" value="1"/>
</dbReference>
<dbReference type="Pfam" id="PF20659">
    <property type="entry name" value="MS_C"/>
    <property type="match status" value="1"/>
</dbReference>
<dbReference type="Pfam" id="PF20656">
    <property type="entry name" value="MS_N"/>
    <property type="match status" value="1"/>
</dbReference>
<dbReference type="Pfam" id="PF01274">
    <property type="entry name" value="MS_TIM-barrel"/>
    <property type="match status" value="1"/>
</dbReference>
<dbReference type="Pfam" id="PF20658">
    <property type="entry name" value="MSG_insertion"/>
    <property type="match status" value="1"/>
</dbReference>
<dbReference type="SUPFAM" id="SSF51645">
    <property type="entry name" value="Malate synthase G"/>
    <property type="match status" value="1"/>
</dbReference>
<organism>
    <name type="scientific">Brucella abortus biovar 1 (strain 9-941)</name>
    <dbReference type="NCBI Taxonomy" id="262698"/>
    <lineage>
        <taxon>Bacteria</taxon>
        <taxon>Pseudomonadati</taxon>
        <taxon>Pseudomonadota</taxon>
        <taxon>Alphaproteobacteria</taxon>
        <taxon>Hyphomicrobiales</taxon>
        <taxon>Brucellaceae</taxon>
        <taxon>Brucella/Ochrobactrum group</taxon>
        <taxon>Brucella</taxon>
    </lineage>
</organism>
<keyword id="KW-0963">Cytoplasm</keyword>
<keyword id="KW-0329">Glyoxylate bypass</keyword>
<keyword id="KW-0460">Magnesium</keyword>
<keyword id="KW-0479">Metal-binding</keyword>
<keyword id="KW-0558">Oxidation</keyword>
<keyword id="KW-0808">Transferase</keyword>
<keyword id="KW-0816">Tricarboxylic acid cycle</keyword>
<evidence type="ECO:0000255" key="1">
    <source>
        <dbReference type="HAMAP-Rule" id="MF_00641"/>
    </source>
</evidence>
<gene>
    <name evidence="1" type="primary">glcB</name>
    <name type="ordered locus">BruAb1_1636</name>
</gene>